<proteinExistence type="inferred from homology"/>
<accession>Q9UXB9</accession>
<feature type="chain" id="PRO_0000120280" description="Probable Brix domain-containing ribosomal biogenesis protein">
    <location>
        <begin position="1"/>
        <end position="170"/>
    </location>
</feature>
<feature type="domain" description="Brix" evidence="1">
    <location>
        <begin position="6"/>
        <end position="170"/>
    </location>
</feature>
<name>BRIX_SACS2</name>
<protein>
    <recommendedName>
        <fullName evidence="1">Probable Brix domain-containing ribosomal biogenesis protein</fullName>
    </recommendedName>
</protein>
<reference key="1">
    <citation type="journal article" date="2000" name="Genome">
        <title>Gene content and organization of a 281-kbp contig from the genome of the extremely thermophilic archaeon, Sulfolobus solfataricus P2.</title>
        <authorList>
            <person name="Charlebois R.L."/>
            <person name="Singh R.K."/>
            <person name="Chan-Weiher C.C.-Y."/>
            <person name="Allard G."/>
            <person name="Chow C."/>
            <person name="Confalonieri F."/>
            <person name="Curtis B."/>
            <person name="Duguet M."/>
            <person name="Erauso G."/>
            <person name="Faguy D."/>
            <person name="Gaasterland T."/>
            <person name="Garrett R.A."/>
            <person name="Gordon P."/>
            <person name="Jeffries A.C."/>
            <person name="Kozera C."/>
            <person name="Kushwaha N."/>
            <person name="Lafleur E."/>
            <person name="Medina N."/>
            <person name="Peng X."/>
            <person name="Penny S.L."/>
            <person name="She Q."/>
            <person name="St Jean A."/>
            <person name="van der Oost J."/>
            <person name="Young F."/>
            <person name="Zivanovic Y."/>
            <person name="Doolittle W.F."/>
            <person name="Ragan M.A."/>
            <person name="Sensen C.W."/>
        </authorList>
    </citation>
    <scope>NUCLEOTIDE SEQUENCE [LARGE SCALE GENOMIC DNA]</scope>
    <source>
        <strain>ATCC 35092 / DSM 1617 / JCM 11322 / P2</strain>
    </source>
</reference>
<reference key="2">
    <citation type="journal article" date="2001" name="Proc. Natl. Acad. Sci. U.S.A.">
        <title>The complete genome of the crenarchaeon Sulfolobus solfataricus P2.</title>
        <authorList>
            <person name="She Q."/>
            <person name="Singh R.K."/>
            <person name="Confalonieri F."/>
            <person name="Zivanovic Y."/>
            <person name="Allard G."/>
            <person name="Awayez M.J."/>
            <person name="Chan-Weiher C.C.-Y."/>
            <person name="Clausen I.G."/>
            <person name="Curtis B.A."/>
            <person name="De Moors A."/>
            <person name="Erauso G."/>
            <person name="Fletcher C."/>
            <person name="Gordon P.M.K."/>
            <person name="Heikamp-de Jong I."/>
            <person name="Jeffries A.C."/>
            <person name="Kozera C.J."/>
            <person name="Medina N."/>
            <person name="Peng X."/>
            <person name="Thi-Ngoc H.P."/>
            <person name="Redder P."/>
            <person name="Schenk M.E."/>
            <person name="Theriault C."/>
            <person name="Tolstrup N."/>
            <person name="Charlebois R.L."/>
            <person name="Doolittle W.F."/>
            <person name="Duguet M."/>
            <person name="Gaasterland T."/>
            <person name="Garrett R.A."/>
            <person name="Ragan M.A."/>
            <person name="Sensen C.W."/>
            <person name="Van der Oost J."/>
        </authorList>
    </citation>
    <scope>NUCLEOTIDE SEQUENCE [LARGE SCALE GENOMIC DNA]</scope>
    <source>
        <strain>ATCC 35092 / DSM 1617 / JCM 11322 / P2</strain>
    </source>
</reference>
<gene>
    <name type="ordered locus">SSO0731</name>
    <name type="ORF">C20_022</name>
</gene>
<organism>
    <name type="scientific">Saccharolobus solfataricus (strain ATCC 35092 / DSM 1617 / JCM 11322 / P2)</name>
    <name type="common">Sulfolobus solfataricus</name>
    <dbReference type="NCBI Taxonomy" id="273057"/>
    <lineage>
        <taxon>Archaea</taxon>
        <taxon>Thermoproteota</taxon>
        <taxon>Thermoprotei</taxon>
        <taxon>Sulfolobales</taxon>
        <taxon>Sulfolobaceae</taxon>
        <taxon>Saccharolobus</taxon>
    </lineage>
</organism>
<keyword id="KW-1185">Reference proteome</keyword>
<keyword id="KW-0690">Ribosome biogenesis</keyword>
<comment type="function">
    <text evidence="1">Probably involved in the biogenesis of the ribosome.</text>
</comment>
<dbReference type="EMBL" id="Y18930">
    <property type="protein sequence ID" value="CAB57572.1"/>
    <property type="molecule type" value="Genomic_DNA"/>
</dbReference>
<dbReference type="EMBL" id="AE006641">
    <property type="protein sequence ID" value="AAK41028.1"/>
    <property type="molecule type" value="Genomic_DNA"/>
</dbReference>
<dbReference type="PIR" id="E90221">
    <property type="entry name" value="E90221"/>
</dbReference>
<dbReference type="RefSeq" id="WP_010923055.1">
    <property type="nucleotide sequence ID" value="NC_002754.1"/>
</dbReference>
<dbReference type="SMR" id="Q9UXB9"/>
<dbReference type="STRING" id="273057.SSO0731"/>
<dbReference type="PaxDb" id="273057-SSO0731"/>
<dbReference type="EnsemblBacteria" id="AAK41028">
    <property type="protein sequence ID" value="AAK41028"/>
    <property type="gene ID" value="SSO0731"/>
</dbReference>
<dbReference type="KEGG" id="sso:SSO0731"/>
<dbReference type="PATRIC" id="fig|273057.12.peg.728"/>
<dbReference type="eggNOG" id="arCOG03247">
    <property type="taxonomic scope" value="Archaea"/>
</dbReference>
<dbReference type="HOGENOM" id="CLU_118422_0_0_2"/>
<dbReference type="InParanoid" id="Q9UXB9"/>
<dbReference type="PhylomeDB" id="Q9UXB9"/>
<dbReference type="Proteomes" id="UP000001974">
    <property type="component" value="Chromosome"/>
</dbReference>
<dbReference type="GO" id="GO:0019843">
    <property type="term" value="F:rRNA binding"/>
    <property type="evidence" value="ECO:0007669"/>
    <property type="project" value="InterPro"/>
</dbReference>
<dbReference type="GO" id="GO:0006364">
    <property type="term" value="P:rRNA processing"/>
    <property type="evidence" value="ECO:0007669"/>
    <property type="project" value="InterPro"/>
</dbReference>
<dbReference type="Gene3D" id="3.40.50.10480">
    <property type="entry name" value="Probable brix-domain ribosomal biogenesis protein"/>
    <property type="match status" value="1"/>
</dbReference>
<dbReference type="HAMAP" id="MF_00699">
    <property type="entry name" value="BriX"/>
    <property type="match status" value="1"/>
</dbReference>
<dbReference type="InterPro" id="IPR007109">
    <property type="entry name" value="Brix"/>
</dbReference>
<dbReference type="InterPro" id="IPR023548">
    <property type="entry name" value="Brix_dom_Rbsml_bgen_prot"/>
</dbReference>
<dbReference type="SMART" id="SM00879">
    <property type="entry name" value="Brix"/>
    <property type="match status" value="1"/>
</dbReference>
<dbReference type="SUPFAM" id="SSF52954">
    <property type="entry name" value="Class II aaRS ABD-related"/>
    <property type="match status" value="1"/>
</dbReference>
<dbReference type="PROSITE" id="PS50833">
    <property type="entry name" value="BRIX"/>
    <property type="match status" value="1"/>
</dbReference>
<evidence type="ECO:0000255" key="1">
    <source>
        <dbReference type="HAMAP-Rule" id="MF_00699"/>
    </source>
</evidence>
<sequence length="170" mass="19614">MHIHRTRIVITSSRDPSIRTRNFLNVLTFVLPDSVKITRGKKSKIEIFERAINLGALYLLFVLAKNGNPLRIIVYDLESLSIKYFFKLSGLSLPSDYNVSLNQIKGHSNVCIKLNECDFLRDFLVDMNMYNLTNNCDVVVNSRLIHTNICELLFMLTTKNIKFLKMILEA</sequence>